<comment type="subcellular location">
    <subcellularLocation>
        <location>Plastid</location>
        <location>Chloroplast</location>
    </subcellularLocation>
</comment>
<comment type="similarity">
    <text evidence="1">Belongs to the ycf68 family.</text>
</comment>
<reference key="1">
    <citation type="journal article" date="1981" name="Cell">
        <title>Sequencing of the 16S-23S spacer in a ribosomal RNA operon of Zea mays chloroplast DNA reveals two split tRNA genes.</title>
        <authorList>
            <person name="Koch W."/>
            <person name="Edwards K."/>
            <person name="Koessel H."/>
        </authorList>
    </citation>
    <scope>NUCLEOTIDE SEQUENCE [GENOMIC DNA]</scope>
</reference>
<reference key="2">
    <citation type="journal article" date="1995" name="J. Mol. Biol.">
        <title>Complete sequence of the maize chloroplast genome: gene content, hotspots of divergence and fine tuning of genetic information by transcript editing.</title>
        <authorList>
            <person name="Maier R.M."/>
            <person name="Neckermann K."/>
            <person name="Igloi G.L."/>
            <person name="Koessel H."/>
        </authorList>
    </citation>
    <scope>NUCLEOTIDE SEQUENCE [LARGE SCALE GENOMIC DNA]</scope>
    <source>
        <strain>cv. B73</strain>
    </source>
</reference>
<dbReference type="EMBL" id="Z00028">
    <property type="protein sequence ID" value="CAB77704.1"/>
    <property type="molecule type" value="Genomic_DNA"/>
</dbReference>
<dbReference type="EMBL" id="X86563">
    <property type="protein sequence ID" value="CAA60341.1"/>
    <property type="molecule type" value="Genomic_DNA"/>
</dbReference>
<dbReference type="EMBL" id="X86563">
    <property type="protein sequence ID" value="CAA60359.1"/>
    <property type="molecule type" value="Genomic_DNA"/>
</dbReference>
<dbReference type="PIR" id="A04524">
    <property type="entry name" value="QIZMI"/>
</dbReference>
<dbReference type="PIR" id="S58626">
    <property type="entry name" value="S58626"/>
</dbReference>
<dbReference type="RefSeq" id="NP_043079.1">
    <property type="nucleotide sequence ID" value="NC_001666.2"/>
</dbReference>
<dbReference type="RefSeq" id="NP_043098.1">
    <property type="nucleotide sequence ID" value="NC_001666.2"/>
</dbReference>
<dbReference type="STRING" id="4577.P03938"/>
<dbReference type="KEGG" id="zma:5469132"/>
<dbReference type="KEGG" id="zma:5469133"/>
<dbReference type="MaizeGDB" id="69587"/>
<dbReference type="InParanoid" id="P03938"/>
<dbReference type="OrthoDB" id="1890903at2759"/>
<dbReference type="Proteomes" id="UP000007305">
    <property type="component" value="Chloroplast"/>
</dbReference>
<dbReference type="ExpressionAtlas" id="P03938">
    <property type="expression patterns" value="baseline and differential"/>
</dbReference>
<dbReference type="GO" id="GO:0009507">
    <property type="term" value="C:chloroplast"/>
    <property type="evidence" value="ECO:0007669"/>
    <property type="project" value="UniProtKB-SubCell"/>
</dbReference>
<dbReference type="InterPro" id="IPR022546">
    <property type="entry name" value="Uncharacterised_Ycf68"/>
</dbReference>
<dbReference type="PANTHER" id="PTHR34890">
    <property type="entry name" value="ORF16-LACZ FUSION PROTEIN-RELATED"/>
    <property type="match status" value="1"/>
</dbReference>
<dbReference type="Pfam" id="PF10839">
    <property type="entry name" value="DUF2647"/>
    <property type="match status" value="1"/>
</dbReference>
<geneLocation type="chloroplast"/>
<keyword id="KW-0150">Chloroplast</keyword>
<keyword id="KW-0934">Plastid</keyword>
<keyword id="KW-1185">Reference proteome</keyword>
<gene>
    <name type="primary">ycf68</name>
</gene>
<evidence type="ECO:0000305" key="1"/>
<feature type="chain" id="PRO_0000217395" description="Uncharacterized protein ycf68">
    <location>
        <begin position="1"/>
        <end position="134"/>
    </location>
</feature>
<feature type="sequence conflict" description="In Ref. 1; CAB77704." evidence="1" ref="1">
    <original>G</original>
    <variation>R</variation>
    <location>
        <position position="50"/>
    </location>
</feature>
<accession>P03938</accession>
<proteinExistence type="inferred from homology"/>
<organism>
    <name type="scientific">Zea mays</name>
    <name type="common">Maize</name>
    <dbReference type="NCBI Taxonomy" id="4577"/>
    <lineage>
        <taxon>Eukaryota</taxon>
        <taxon>Viridiplantae</taxon>
        <taxon>Streptophyta</taxon>
        <taxon>Embryophyta</taxon>
        <taxon>Tracheophyta</taxon>
        <taxon>Spermatophyta</taxon>
        <taxon>Magnoliopsida</taxon>
        <taxon>Liliopsida</taxon>
        <taxon>Poales</taxon>
        <taxon>Poaceae</taxon>
        <taxon>PACMAD clade</taxon>
        <taxon>Panicoideae</taxon>
        <taxon>Andropogonodae</taxon>
        <taxon>Andropogoneae</taxon>
        <taxon>Tripsacinae</taxon>
        <taxon>Zea</taxon>
    </lineage>
</organism>
<sequence>MAYSSCLNRSLKPNKLLLRRIDGAIQVRSHVDRTFYSLVGSGRSGGGPPGLLSSRESIHPLSVYGELSLEHRLRFVLNGKMEHLTTHLHRPRTTRSPLSFWGDGGIVPFEPFFHAFPGGLEKAVINRTSLILPS</sequence>
<protein>
    <recommendedName>
        <fullName>Uncharacterized protein ycf68</fullName>
    </recommendedName>
    <alternativeName>
        <fullName>ORF 134</fullName>
    </alternativeName>
</protein>
<name>YCF68_MAIZE</name>